<reference key="1">
    <citation type="submission" date="2006-12" db="EMBL/GenBank/DDBJ databases">
        <title>Complete sequence of chromosome 1 of Nocardioides sp. JS614.</title>
        <authorList>
            <person name="Copeland A."/>
            <person name="Lucas S."/>
            <person name="Lapidus A."/>
            <person name="Barry K."/>
            <person name="Detter J.C."/>
            <person name="Glavina del Rio T."/>
            <person name="Hammon N."/>
            <person name="Israni S."/>
            <person name="Dalin E."/>
            <person name="Tice H."/>
            <person name="Pitluck S."/>
            <person name="Thompson L.S."/>
            <person name="Brettin T."/>
            <person name="Bruce D."/>
            <person name="Han C."/>
            <person name="Tapia R."/>
            <person name="Schmutz J."/>
            <person name="Larimer F."/>
            <person name="Land M."/>
            <person name="Hauser L."/>
            <person name="Kyrpides N."/>
            <person name="Kim E."/>
            <person name="Mattes T."/>
            <person name="Gossett J."/>
            <person name="Richardson P."/>
        </authorList>
    </citation>
    <scope>NUCLEOTIDE SEQUENCE [LARGE SCALE GENOMIC DNA]</scope>
    <source>
        <strain>ATCC BAA-499 / JS614</strain>
    </source>
</reference>
<comment type="function">
    <text evidence="1">Involved in cell division and chromosome segregation.</text>
</comment>
<comment type="similarity">
    <text evidence="1">Belongs to the WhiA family.</text>
</comment>
<organism>
    <name type="scientific">Nocardioides sp. (strain ATCC BAA-499 / JS614)</name>
    <dbReference type="NCBI Taxonomy" id="196162"/>
    <lineage>
        <taxon>Bacteria</taxon>
        <taxon>Bacillati</taxon>
        <taxon>Actinomycetota</taxon>
        <taxon>Actinomycetes</taxon>
        <taxon>Propionibacteriales</taxon>
        <taxon>Nocardioidaceae</taxon>
        <taxon>Nocardioides</taxon>
    </lineage>
</organism>
<evidence type="ECO:0000255" key="1">
    <source>
        <dbReference type="HAMAP-Rule" id="MF_01420"/>
    </source>
</evidence>
<gene>
    <name evidence="1" type="primary">whiA</name>
    <name type="ordered locus">Noca_2529</name>
</gene>
<sequence length="328" mass="35275">MAMTAQVKAELASTQVTKTCCRKAEVASMLRFAGGLHIVSGRIVVEAEFDTGAAARRLRTNIAEVYGHQSDVVMVQGNGIRKGSRYIVRVVKDGEALARQTGLLDQRGRPVRGLPPAVVSGGGCDAVAAWRGAFLAHGSLTEPGRSSALEVTCPGPEAALALVGVARRLGIHAKAREVRGVDRVVIRDGDAIGQLLTRLGAHESLMAWEERRMRREVRATANRLANFDDANLRRSARAAVAAGARVDRAMEILGEEVPDHLRMAGQLRLEHKQASLEELGQLHDPVLTKDAIAGRIRRLLAMADKRAEELGIPDTESSLTPDMLADEG</sequence>
<keyword id="KW-0131">Cell cycle</keyword>
<keyword id="KW-0132">Cell division</keyword>
<keyword id="KW-0238">DNA-binding</keyword>
<keyword id="KW-1185">Reference proteome</keyword>
<accession>A1SJP8</accession>
<dbReference type="EMBL" id="CP000509">
    <property type="protein sequence ID" value="ABL82033.1"/>
    <property type="molecule type" value="Genomic_DNA"/>
</dbReference>
<dbReference type="RefSeq" id="WP_011755973.1">
    <property type="nucleotide sequence ID" value="NC_008699.1"/>
</dbReference>
<dbReference type="SMR" id="A1SJP8"/>
<dbReference type="STRING" id="196162.Noca_2529"/>
<dbReference type="KEGG" id="nca:Noca_2529"/>
<dbReference type="eggNOG" id="COG1481">
    <property type="taxonomic scope" value="Bacteria"/>
</dbReference>
<dbReference type="HOGENOM" id="CLU_053282_0_0_11"/>
<dbReference type="OrthoDB" id="5197218at2"/>
<dbReference type="Proteomes" id="UP000000640">
    <property type="component" value="Chromosome"/>
</dbReference>
<dbReference type="GO" id="GO:0003677">
    <property type="term" value="F:DNA binding"/>
    <property type="evidence" value="ECO:0007669"/>
    <property type="project" value="UniProtKB-UniRule"/>
</dbReference>
<dbReference type="GO" id="GO:0051301">
    <property type="term" value="P:cell division"/>
    <property type="evidence" value="ECO:0007669"/>
    <property type="project" value="UniProtKB-UniRule"/>
</dbReference>
<dbReference type="GO" id="GO:0043937">
    <property type="term" value="P:regulation of sporulation"/>
    <property type="evidence" value="ECO:0007669"/>
    <property type="project" value="InterPro"/>
</dbReference>
<dbReference type="FunFam" id="3.10.28.10:FF:000001">
    <property type="entry name" value="Probable cell division protein WhiA"/>
    <property type="match status" value="1"/>
</dbReference>
<dbReference type="Gene3D" id="3.10.28.10">
    <property type="entry name" value="Homing endonucleases"/>
    <property type="match status" value="1"/>
</dbReference>
<dbReference type="HAMAP" id="MF_01420">
    <property type="entry name" value="HTH_type_WhiA"/>
    <property type="match status" value="1"/>
</dbReference>
<dbReference type="InterPro" id="IPR027434">
    <property type="entry name" value="Homing_endonucl"/>
</dbReference>
<dbReference type="InterPro" id="IPR018478">
    <property type="entry name" value="Sporu_reg_WhiA_N_dom"/>
</dbReference>
<dbReference type="InterPro" id="IPR003802">
    <property type="entry name" value="Sporulation_regulator_WhiA"/>
</dbReference>
<dbReference type="InterPro" id="IPR023054">
    <property type="entry name" value="Sporulation_regulator_WhiA_C"/>
</dbReference>
<dbReference type="InterPro" id="IPR039518">
    <property type="entry name" value="WhiA_LAGLIDADG_dom"/>
</dbReference>
<dbReference type="NCBIfam" id="TIGR00647">
    <property type="entry name" value="DNA_bind_WhiA"/>
    <property type="match status" value="1"/>
</dbReference>
<dbReference type="PANTHER" id="PTHR37307">
    <property type="entry name" value="CELL DIVISION PROTEIN WHIA-RELATED"/>
    <property type="match status" value="1"/>
</dbReference>
<dbReference type="PANTHER" id="PTHR37307:SF1">
    <property type="entry name" value="CELL DIVISION PROTEIN WHIA-RELATED"/>
    <property type="match status" value="1"/>
</dbReference>
<dbReference type="Pfam" id="PF02650">
    <property type="entry name" value="HTH_WhiA"/>
    <property type="match status" value="1"/>
</dbReference>
<dbReference type="Pfam" id="PF14527">
    <property type="entry name" value="LAGLIDADG_WhiA"/>
    <property type="match status" value="1"/>
</dbReference>
<dbReference type="Pfam" id="PF10298">
    <property type="entry name" value="WhiA_N"/>
    <property type="match status" value="1"/>
</dbReference>
<feature type="chain" id="PRO_0000376540" description="Probable cell division protein WhiA">
    <location>
        <begin position="1"/>
        <end position="328"/>
    </location>
</feature>
<feature type="DNA-binding region" description="H-T-H motif" evidence="1">
    <location>
        <begin position="275"/>
        <end position="308"/>
    </location>
</feature>
<protein>
    <recommendedName>
        <fullName evidence="1">Probable cell division protein WhiA</fullName>
    </recommendedName>
</protein>
<name>WHIA_NOCSJ</name>
<proteinExistence type="inferred from homology"/>